<protein>
    <recommendedName>
        <fullName evidence="1">DNA topoisomerase 4 subunit A</fullName>
        <ecNumber evidence="1">5.6.2.2</ecNumber>
    </recommendedName>
    <alternativeName>
        <fullName evidence="1">Topoisomerase IV subunit A</fullName>
    </alternativeName>
</protein>
<proteinExistence type="inferred from homology"/>
<gene>
    <name evidence="1" type="primary">parC</name>
    <name type="ordered locus">RF_0107</name>
</gene>
<sequence>MKEAKIENIDFGNALSERYLAYALSTIMSRSLPDVRDGLKPVHRRLLYAMLQLRLEPNSGYKKCARVVGDVIGKYHPHGDVAVYDTLVRLAQHFSLRYPLIDGQGNFGSIDGDNAAAMRYTESRMTEICTLLMVDIEKDTVDFRPTYDDSDLEPVIMPASFPNLLANGSEGIAVGMATNIPPHNLHELCDALVHLIDHPKAEISDMMNFIKGPDFPTGGIIIDKAELINAAYSTGRGSFRMRSRWEKEELSYGTYQIVVTEIPYQVQKSKLIEQIAILLKDKKIPLVSNIRDESTDIIRLVIEPRDRGCDPQIVMESLFKLTNLESRIQLNMNVIGSNNVPRVMNILEVLQEFLAHRQNIVTRRSTYLLNKIKHRLEILEGLRIAYLNLDEIIKIIREEDEPKAIMMERFKLTEIQVEAILNTRLRSLRKLEEQEIINEHSNLQKQQAILEEILNNPKELWKIVKKEIKAVQTKFGLNTVIGARRTSFEEVTLTNQVVDITAFITKEPITIICSKMGWVRSLKGHNTDLSTIKYKEGDAEKFIIEAYTTDKILIVSSEGRFFTLLADNISKGKGTGESIKLLVDIGNNDITNILVHKSDQLLLLASSIGKGFLVNSNEVMAQTKTGKQIMNVPDGHTCIACLPVNGDSIACIGESRKLLVFNIDEIPEMKKGQGVTLQKFKNAKLLDIKIFNKEDGLSWNNNGKVKLEKNIIAFLGKRGSTGKLPPMGFHKNNRFSS</sequence>
<comment type="function">
    <text evidence="1">Topoisomerase IV is essential for chromosome segregation. It relaxes supercoiled DNA. Performs the decatenation events required during the replication of a circular DNA molecule.</text>
</comment>
<comment type="catalytic activity">
    <reaction evidence="1">
        <text>ATP-dependent breakage, passage and rejoining of double-stranded DNA.</text>
        <dbReference type="EC" id="5.6.2.2"/>
    </reaction>
</comment>
<comment type="subunit">
    <text evidence="1">Heterotetramer composed of ParC and ParE.</text>
</comment>
<comment type="subcellular location">
    <subcellularLocation>
        <location evidence="1">Cell membrane</location>
        <topology evidence="1">Peripheral membrane protein</topology>
    </subcellularLocation>
</comment>
<comment type="similarity">
    <text evidence="1">Belongs to the type II topoisomerase GyrA/ParC subunit family. ParC type 1 subfamily.</text>
</comment>
<evidence type="ECO:0000255" key="1">
    <source>
        <dbReference type="HAMAP-Rule" id="MF_00936"/>
    </source>
</evidence>
<evidence type="ECO:0000255" key="2">
    <source>
        <dbReference type="PROSITE-ProRule" id="PRU01384"/>
    </source>
</evidence>
<feature type="chain" id="PRO_0000273114" description="DNA topoisomerase 4 subunit A">
    <location>
        <begin position="1"/>
        <end position="737"/>
    </location>
</feature>
<feature type="domain" description="Topo IIA-type catalytic" evidence="2">
    <location>
        <begin position="32"/>
        <end position="496"/>
    </location>
</feature>
<feature type="active site" description="O-(5'-phospho-DNA)-tyrosine intermediate" evidence="1">
    <location>
        <position position="120"/>
    </location>
</feature>
<feature type="site" description="Interaction with DNA" evidence="1">
    <location>
        <position position="40"/>
    </location>
</feature>
<feature type="site" description="Interaction with DNA" evidence="1">
    <location>
        <position position="76"/>
    </location>
</feature>
<feature type="site" description="Interaction with DNA" evidence="1">
    <location>
        <position position="78"/>
    </location>
</feature>
<feature type="site" description="Transition state stabilizer" evidence="1">
    <location>
        <position position="119"/>
    </location>
</feature>
<reference key="1">
    <citation type="journal article" date="2005" name="PLoS Biol.">
        <title>The genome sequence of Rickettsia felis identifies the first putative conjugative plasmid in an obligate intracellular parasite.</title>
        <authorList>
            <person name="Ogata H."/>
            <person name="Renesto P."/>
            <person name="Audic S."/>
            <person name="Robert C."/>
            <person name="Blanc G."/>
            <person name="Fournier P.-E."/>
            <person name="Parinello H."/>
            <person name="Claverie J.-M."/>
            <person name="Raoult D."/>
        </authorList>
    </citation>
    <scope>NUCLEOTIDE SEQUENCE [LARGE SCALE GENOMIC DNA]</scope>
    <source>
        <strain>ATCC VR-1525 / URRWXCal2</strain>
    </source>
</reference>
<keyword id="KW-1003">Cell membrane</keyword>
<keyword id="KW-0238">DNA-binding</keyword>
<keyword id="KW-0413">Isomerase</keyword>
<keyword id="KW-0472">Membrane</keyword>
<keyword id="KW-0799">Topoisomerase</keyword>
<organism>
    <name type="scientific">Rickettsia felis (strain ATCC VR-1525 / URRWXCal2)</name>
    <name type="common">Rickettsia azadi</name>
    <dbReference type="NCBI Taxonomy" id="315456"/>
    <lineage>
        <taxon>Bacteria</taxon>
        <taxon>Pseudomonadati</taxon>
        <taxon>Pseudomonadota</taxon>
        <taxon>Alphaproteobacteria</taxon>
        <taxon>Rickettsiales</taxon>
        <taxon>Rickettsiaceae</taxon>
        <taxon>Rickettsieae</taxon>
        <taxon>Rickettsia</taxon>
        <taxon>spotted fever group</taxon>
    </lineage>
</organism>
<name>PARC_RICFE</name>
<dbReference type="EC" id="5.6.2.2" evidence="1"/>
<dbReference type="EMBL" id="CP000053">
    <property type="protein sequence ID" value="AAY60958.1"/>
    <property type="molecule type" value="Genomic_DNA"/>
</dbReference>
<dbReference type="SMR" id="Q4UNA0"/>
<dbReference type="STRING" id="315456.RF_0107"/>
<dbReference type="KEGG" id="rfe:RF_0107"/>
<dbReference type="eggNOG" id="COG0188">
    <property type="taxonomic scope" value="Bacteria"/>
</dbReference>
<dbReference type="HOGENOM" id="CLU_002977_4_1_5"/>
<dbReference type="OrthoDB" id="9806486at2"/>
<dbReference type="Proteomes" id="UP000008548">
    <property type="component" value="Chromosome"/>
</dbReference>
<dbReference type="GO" id="GO:0005694">
    <property type="term" value="C:chromosome"/>
    <property type="evidence" value="ECO:0007669"/>
    <property type="project" value="InterPro"/>
</dbReference>
<dbReference type="GO" id="GO:0005737">
    <property type="term" value="C:cytoplasm"/>
    <property type="evidence" value="ECO:0007669"/>
    <property type="project" value="TreeGrafter"/>
</dbReference>
<dbReference type="GO" id="GO:0009330">
    <property type="term" value="C:DNA topoisomerase type II (double strand cut, ATP-hydrolyzing) complex"/>
    <property type="evidence" value="ECO:0007669"/>
    <property type="project" value="TreeGrafter"/>
</dbReference>
<dbReference type="GO" id="GO:0019897">
    <property type="term" value="C:extrinsic component of plasma membrane"/>
    <property type="evidence" value="ECO:0007669"/>
    <property type="project" value="UniProtKB-UniRule"/>
</dbReference>
<dbReference type="GO" id="GO:0005524">
    <property type="term" value="F:ATP binding"/>
    <property type="evidence" value="ECO:0007669"/>
    <property type="project" value="InterPro"/>
</dbReference>
<dbReference type="GO" id="GO:0003677">
    <property type="term" value="F:DNA binding"/>
    <property type="evidence" value="ECO:0007669"/>
    <property type="project" value="UniProtKB-UniRule"/>
</dbReference>
<dbReference type="GO" id="GO:0003918">
    <property type="term" value="F:DNA topoisomerase type II (double strand cut, ATP-hydrolyzing) activity"/>
    <property type="evidence" value="ECO:0007669"/>
    <property type="project" value="UniProtKB-UniRule"/>
</dbReference>
<dbReference type="GO" id="GO:0007059">
    <property type="term" value="P:chromosome segregation"/>
    <property type="evidence" value="ECO:0007669"/>
    <property type="project" value="UniProtKB-UniRule"/>
</dbReference>
<dbReference type="GO" id="GO:0006265">
    <property type="term" value="P:DNA topological change"/>
    <property type="evidence" value="ECO:0007669"/>
    <property type="project" value="UniProtKB-UniRule"/>
</dbReference>
<dbReference type="CDD" id="cd00187">
    <property type="entry name" value="TOP4c"/>
    <property type="match status" value="1"/>
</dbReference>
<dbReference type="FunFam" id="1.10.268.10:FF:000001">
    <property type="entry name" value="DNA gyrase subunit A"/>
    <property type="match status" value="1"/>
</dbReference>
<dbReference type="FunFam" id="3.90.199.10:FF:000001">
    <property type="entry name" value="DNA gyrase subunit A"/>
    <property type="match status" value="1"/>
</dbReference>
<dbReference type="Gene3D" id="3.30.1360.40">
    <property type="match status" value="1"/>
</dbReference>
<dbReference type="Gene3D" id="2.120.10.90">
    <property type="entry name" value="DNA gyrase/topoisomerase IV, subunit A, C-terminal"/>
    <property type="match status" value="1"/>
</dbReference>
<dbReference type="Gene3D" id="3.90.199.10">
    <property type="entry name" value="Topoisomerase II, domain 5"/>
    <property type="match status" value="1"/>
</dbReference>
<dbReference type="Gene3D" id="1.10.268.10">
    <property type="entry name" value="Topoisomerase, domain 3"/>
    <property type="match status" value="1"/>
</dbReference>
<dbReference type="HAMAP" id="MF_00936">
    <property type="entry name" value="ParC_type1"/>
    <property type="match status" value="1"/>
</dbReference>
<dbReference type="InterPro" id="IPR006691">
    <property type="entry name" value="GyrA/parC_rep"/>
</dbReference>
<dbReference type="InterPro" id="IPR035516">
    <property type="entry name" value="Gyrase/topoIV_suA_C"/>
</dbReference>
<dbReference type="InterPro" id="IPR013760">
    <property type="entry name" value="Topo_IIA-like_dom_sf"/>
</dbReference>
<dbReference type="InterPro" id="IPR013758">
    <property type="entry name" value="Topo_IIA_A/C_ab"/>
</dbReference>
<dbReference type="InterPro" id="IPR013757">
    <property type="entry name" value="Topo_IIA_A_a_sf"/>
</dbReference>
<dbReference type="InterPro" id="IPR002205">
    <property type="entry name" value="Topo_IIA_dom_A"/>
</dbReference>
<dbReference type="InterPro" id="IPR005742">
    <property type="entry name" value="TopoIV_A_Gneg"/>
</dbReference>
<dbReference type="InterPro" id="IPR050220">
    <property type="entry name" value="Type_II_DNA_Topoisomerases"/>
</dbReference>
<dbReference type="NCBIfam" id="TIGR01062">
    <property type="entry name" value="parC_Gneg"/>
    <property type="match status" value="1"/>
</dbReference>
<dbReference type="NCBIfam" id="NF004044">
    <property type="entry name" value="PRK05561.1"/>
    <property type="match status" value="1"/>
</dbReference>
<dbReference type="PANTHER" id="PTHR43493">
    <property type="entry name" value="DNA GYRASE/TOPOISOMERASE SUBUNIT A"/>
    <property type="match status" value="1"/>
</dbReference>
<dbReference type="PANTHER" id="PTHR43493:SF1">
    <property type="entry name" value="DNA TOPOISOMERASE 4 SUBUNIT A"/>
    <property type="match status" value="1"/>
</dbReference>
<dbReference type="Pfam" id="PF03989">
    <property type="entry name" value="DNA_gyraseA_C"/>
    <property type="match status" value="2"/>
</dbReference>
<dbReference type="Pfam" id="PF00521">
    <property type="entry name" value="DNA_topoisoIV"/>
    <property type="match status" value="1"/>
</dbReference>
<dbReference type="SMART" id="SM00434">
    <property type="entry name" value="TOP4c"/>
    <property type="match status" value="1"/>
</dbReference>
<dbReference type="SUPFAM" id="SSF101904">
    <property type="entry name" value="GyrA/ParC C-terminal domain-like"/>
    <property type="match status" value="1"/>
</dbReference>
<dbReference type="SUPFAM" id="SSF56719">
    <property type="entry name" value="Type II DNA topoisomerase"/>
    <property type="match status" value="1"/>
</dbReference>
<dbReference type="PROSITE" id="PS52040">
    <property type="entry name" value="TOPO_IIA"/>
    <property type="match status" value="1"/>
</dbReference>
<accession>Q4UNA0</accession>